<keyword id="KW-0963">Cytoplasm</keyword>
<keyword id="KW-0251">Elongation factor</keyword>
<keyword id="KW-0379">Hydroxylation</keyword>
<keyword id="KW-0648">Protein biosynthesis</keyword>
<gene>
    <name evidence="1" type="primary">efp</name>
    <name type="ordered locus">YpsIP31758_3672</name>
</gene>
<comment type="function">
    <text evidence="1">Involved in peptide bond synthesis. Alleviates ribosome stalling that occurs when 3 or more consecutive Pro residues or the sequence PPG is present in a protein, possibly by augmenting the peptidyl transferase activity of the ribosome. Modification of Lys-34 is required for alleviation.</text>
</comment>
<comment type="pathway">
    <text evidence="1">Protein biosynthesis; polypeptide chain elongation.</text>
</comment>
<comment type="subcellular location">
    <subcellularLocation>
        <location evidence="1">Cytoplasm</location>
    </subcellularLocation>
</comment>
<comment type="PTM">
    <text evidence="1">May be beta-lysylated on the epsilon-amino group of Lys-34 by the combined action of EpmA and EpmB, and then hydroxylated on the C5 position of the same residue by EpmC (if this protein is present). Lysylation is critical for the stimulatory effect of EF-P on peptide-bond formation. The lysylation moiety may extend toward the peptidyltransferase center and stabilize the terminal 3-CCA end of the tRNA. Hydroxylation of the C5 position on Lys-34 may allow additional potential stabilizing hydrogen-bond interactions with the P-tRNA.</text>
</comment>
<comment type="similarity">
    <text evidence="1">Belongs to the elongation factor P family.</text>
</comment>
<feature type="chain" id="PRO_1000057929" description="Elongation factor P">
    <location>
        <begin position="1"/>
        <end position="188"/>
    </location>
</feature>
<feature type="modified residue" description="N6-(3,6-diaminohexanoyl)-5-hydroxylysine" evidence="1">
    <location>
        <position position="34"/>
    </location>
</feature>
<reference key="1">
    <citation type="journal article" date="2007" name="PLoS Genet.">
        <title>The complete genome sequence of Yersinia pseudotuberculosis IP31758, the causative agent of Far East scarlet-like fever.</title>
        <authorList>
            <person name="Eppinger M."/>
            <person name="Rosovitz M.J."/>
            <person name="Fricke W.F."/>
            <person name="Rasko D.A."/>
            <person name="Kokorina G."/>
            <person name="Fayolle C."/>
            <person name="Lindler L.E."/>
            <person name="Carniel E."/>
            <person name="Ravel J."/>
        </authorList>
    </citation>
    <scope>NUCLEOTIDE SEQUENCE [LARGE SCALE GENOMIC DNA]</scope>
    <source>
        <strain>IP 31758</strain>
    </source>
</reference>
<proteinExistence type="inferred from homology"/>
<dbReference type="EMBL" id="CP000720">
    <property type="protein sequence ID" value="ABS45999.1"/>
    <property type="molecule type" value="Genomic_DNA"/>
</dbReference>
<dbReference type="RefSeq" id="WP_002209131.1">
    <property type="nucleotide sequence ID" value="NC_009708.1"/>
</dbReference>
<dbReference type="SMR" id="A7FMZ8"/>
<dbReference type="GeneID" id="57974254"/>
<dbReference type="KEGG" id="ypi:YpsIP31758_3672"/>
<dbReference type="HOGENOM" id="CLU_074944_0_0_6"/>
<dbReference type="UniPathway" id="UPA00345"/>
<dbReference type="Proteomes" id="UP000002412">
    <property type="component" value="Chromosome"/>
</dbReference>
<dbReference type="GO" id="GO:0005737">
    <property type="term" value="C:cytoplasm"/>
    <property type="evidence" value="ECO:0007669"/>
    <property type="project" value="UniProtKB-SubCell"/>
</dbReference>
<dbReference type="GO" id="GO:0003746">
    <property type="term" value="F:translation elongation factor activity"/>
    <property type="evidence" value="ECO:0007669"/>
    <property type="project" value="UniProtKB-UniRule"/>
</dbReference>
<dbReference type="GO" id="GO:0043043">
    <property type="term" value="P:peptide biosynthetic process"/>
    <property type="evidence" value="ECO:0007669"/>
    <property type="project" value="InterPro"/>
</dbReference>
<dbReference type="CDD" id="cd04470">
    <property type="entry name" value="S1_EF-P_repeat_1"/>
    <property type="match status" value="1"/>
</dbReference>
<dbReference type="CDD" id="cd05794">
    <property type="entry name" value="S1_EF-P_repeat_2"/>
    <property type="match status" value="1"/>
</dbReference>
<dbReference type="FunFam" id="2.30.30.30:FF:000003">
    <property type="entry name" value="Elongation factor P"/>
    <property type="match status" value="1"/>
</dbReference>
<dbReference type="FunFam" id="2.40.50.140:FF:000004">
    <property type="entry name" value="Elongation factor P"/>
    <property type="match status" value="1"/>
</dbReference>
<dbReference type="FunFam" id="2.40.50.140:FF:000009">
    <property type="entry name" value="Elongation factor P"/>
    <property type="match status" value="1"/>
</dbReference>
<dbReference type="Gene3D" id="2.30.30.30">
    <property type="match status" value="1"/>
</dbReference>
<dbReference type="Gene3D" id="2.40.50.140">
    <property type="entry name" value="Nucleic acid-binding proteins"/>
    <property type="match status" value="2"/>
</dbReference>
<dbReference type="HAMAP" id="MF_00141">
    <property type="entry name" value="EF_P"/>
    <property type="match status" value="1"/>
</dbReference>
<dbReference type="InterPro" id="IPR015365">
    <property type="entry name" value="Elong-fact-P_C"/>
</dbReference>
<dbReference type="InterPro" id="IPR012340">
    <property type="entry name" value="NA-bd_OB-fold"/>
</dbReference>
<dbReference type="InterPro" id="IPR014722">
    <property type="entry name" value="Rib_uL2_dom2"/>
</dbReference>
<dbReference type="InterPro" id="IPR020599">
    <property type="entry name" value="Transl_elong_fac_P/YeiP"/>
</dbReference>
<dbReference type="InterPro" id="IPR013185">
    <property type="entry name" value="Transl_elong_KOW-like"/>
</dbReference>
<dbReference type="InterPro" id="IPR001059">
    <property type="entry name" value="Transl_elong_P/YeiP_cen"/>
</dbReference>
<dbReference type="InterPro" id="IPR013852">
    <property type="entry name" value="Transl_elong_P/YeiP_CS"/>
</dbReference>
<dbReference type="InterPro" id="IPR011768">
    <property type="entry name" value="Transl_elongation_fac_P"/>
</dbReference>
<dbReference type="InterPro" id="IPR008991">
    <property type="entry name" value="Translation_prot_SH3-like_sf"/>
</dbReference>
<dbReference type="NCBIfam" id="TIGR00038">
    <property type="entry name" value="efp"/>
    <property type="match status" value="1"/>
</dbReference>
<dbReference type="NCBIfam" id="NF001810">
    <property type="entry name" value="PRK00529.1"/>
    <property type="match status" value="1"/>
</dbReference>
<dbReference type="PANTHER" id="PTHR30053">
    <property type="entry name" value="ELONGATION FACTOR P"/>
    <property type="match status" value="1"/>
</dbReference>
<dbReference type="PANTHER" id="PTHR30053:SF12">
    <property type="entry name" value="ELONGATION FACTOR P (EF-P) FAMILY PROTEIN"/>
    <property type="match status" value="1"/>
</dbReference>
<dbReference type="Pfam" id="PF01132">
    <property type="entry name" value="EFP"/>
    <property type="match status" value="1"/>
</dbReference>
<dbReference type="Pfam" id="PF08207">
    <property type="entry name" value="EFP_N"/>
    <property type="match status" value="1"/>
</dbReference>
<dbReference type="Pfam" id="PF09285">
    <property type="entry name" value="Elong-fact-P_C"/>
    <property type="match status" value="1"/>
</dbReference>
<dbReference type="PIRSF" id="PIRSF005901">
    <property type="entry name" value="EF-P"/>
    <property type="match status" value="1"/>
</dbReference>
<dbReference type="SMART" id="SM01185">
    <property type="entry name" value="EFP"/>
    <property type="match status" value="1"/>
</dbReference>
<dbReference type="SMART" id="SM00841">
    <property type="entry name" value="Elong-fact-P_C"/>
    <property type="match status" value="1"/>
</dbReference>
<dbReference type="SUPFAM" id="SSF50249">
    <property type="entry name" value="Nucleic acid-binding proteins"/>
    <property type="match status" value="2"/>
</dbReference>
<dbReference type="SUPFAM" id="SSF50104">
    <property type="entry name" value="Translation proteins SH3-like domain"/>
    <property type="match status" value="1"/>
</dbReference>
<dbReference type="PROSITE" id="PS01275">
    <property type="entry name" value="EFP"/>
    <property type="match status" value="1"/>
</dbReference>
<accession>A7FMZ8</accession>
<evidence type="ECO:0000255" key="1">
    <source>
        <dbReference type="HAMAP-Rule" id="MF_00141"/>
    </source>
</evidence>
<organism>
    <name type="scientific">Yersinia pseudotuberculosis serotype O:1b (strain IP 31758)</name>
    <dbReference type="NCBI Taxonomy" id="349747"/>
    <lineage>
        <taxon>Bacteria</taxon>
        <taxon>Pseudomonadati</taxon>
        <taxon>Pseudomonadota</taxon>
        <taxon>Gammaproteobacteria</taxon>
        <taxon>Enterobacterales</taxon>
        <taxon>Yersiniaceae</taxon>
        <taxon>Yersinia</taxon>
    </lineage>
</organism>
<name>EFP_YERP3</name>
<sequence length="188" mass="20711">MASYYSNDFRPGLKIMFEGEPYAVESSEFVKPGKGQAFARVKMRRLLTGGRVEKTFKSTDSLEGADVNDMNLTYLYNDGEFWHFMNNETYEQLQADAKAVGDNGKWLIDQAECIVTLWNGQPIAVTPPNFVELEIVDTDPGLKGDTAGTGGKPATLSTGAVVKVPLFVQVGEIIKVDTRSGEYVSRVK</sequence>
<protein>
    <recommendedName>
        <fullName evidence="1">Elongation factor P</fullName>
        <shortName evidence="1">EF-P</shortName>
    </recommendedName>
</protein>